<protein>
    <recommendedName>
        <fullName evidence="1">Uracil-DNA glycosylase 2</fullName>
        <shortName evidence="1">UDG 2</shortName>
        <ecNumber evidence="1">3.2.2.27</ecNumber>
    </recommendedName>
</protein>
<accession>Q8Y7P6</accession>
<feature type="chain" id="PRO_0000176114" description="Uracil-DNA glycosylase 2">
    <location>
        <begin position="1"/>
        <end position="224"/>
    </location>
</feature>
<feature type="active site" description="Proton acceptor" evidence="1">
    <location>
        <position position="64"/>
    </location>
</feature>
<gene>
    <name evidence="1" type="primary">ung2</name>
    <name type="ordered locus">lmo1227</name>
</gene>
<keyword id="KW-0963">Cytoplasm</keyword>
<keyword id="KW-0227">DNA damage</keyword>
<keyword id="KW-0234">DNA repair</keyword>
<keyword id="KW-0378">Hydrolase</keyword>
<keyword id="KW-1185">Reference proteome</keyword>
<sequence length="224" mass="25562">MIKLGNDWDELLKNEFNQPYYLTLRQFLKKEYQTKKVFPDMYDIFNALKHTAYKDVKVVILGQDPYHGPGQAHGLSFSVQQGVQIPPSLQNIYLELHNDLNCEIPNNGYLIPWADQGVLLLNTVLTVRAGQANSHRGQGWEILTNHIIEIINQKEEPVVFLLWGSNAKEKLQLLTNPKHTAFTSVHPSPLSASRGFMGCKHFSKTNQFLEQNGVKPIDWQIPSI</sequence>
<dbReference type="EC" id="3.2.2.27" evidence="1"/>
<dbReference type="EMBL" id="AL591978">
    <property type="protein sequence ID" value="CAC99305.1"/>
    <property type="molecule type" value="Genomic_DNA"/>
</dbReference>
<dbReference type="PIR" id="AC1228">
    <property type="entry name" value="AC1228"/>
</dbReference>
<dbReference type="RefSeq" id="NP_464752.1">
    <property type="nucleotide sequence ID" value="NC_003210.1"/>
</dbReference>
<dbReference type="RefSeq" id="WP_003732773.1">
    <property type="nucleotide sequence ID" value="NZ_CP149495.1"/>
</dbReference>
<dbReference type="SMR" id="Q8Y7P6"/>
<dbReference type="STRING" id="169963.gene:17593883"/>
<dbReference type="PaxDb" id="169963-lmo1227"/>
<dbReference type="EnsemblBacteria" id="CAC99305">
    <property type="protein sequence ID" value="CAC99305"/>
    <property type="gene ID" value="CAC99305"/>
</dbReference>
<dbReference type="GeneID" id="986857"/>
<dbReference type="KEGG" id="lmo:lmo1227"/>
<dbReference type="PATRIC" id="fig|169963.11.peg.1258"/>
<dbReference type="eggNOG" id="COG0692">
    <property type="taxonomic scope" value="Bacteria"/>
</dbReference>
<dbReference type="HOGENOM" id="CLU_032162_3_0_9"/>
<dbReference type="OrthoDB" id="9804372at2"/>
<dbReference type="PhylomeDB" id="Q8Y7P6"/>
<dbReference type="BioCyc" id="LMON169963:LMO1227-MONOMER"/>
<dbReference type="Proteomes" id="UP000000817">
    <property type="component" value="Chromosome"/>
</dbReference>
<dbReference type="GO" id="GO:0005737">
    <property type="term" value="C:cytoplasm"/>
    <property type="evidence" value="ECO:0007669"/>
    <property type="project" value="UniProtKB-SubCell"/>
</dbReference>
<dbReference type="GO" id="GO:0004844">
    <property type="term" value="F:uracil DNA N-glycosylase activity"/>
    <property type="evidence" value="ECO:0007669"/>
    <property type="project" value="UniProtKB-UniRule"/>
</dbReference>
<dbReference type="GO" id="GO:0097510">
    <property type="term" value="P:base-excision repair, AP site formation via deaminated base removal"/>
    <property type="evidence" value="ECO:0000318"/>
    <property type="project" value="GO_Central"/>
</dbReference>
<dbReference type="CDD" id="cd10027">
    <property type="entry name" value="UDG-F1-like"/>
    <property type="match status" value="1"/>
</dbReference>
<dbReference type="FunFam" id="3.40.470.10:FF:000001">
    <property type="entry name" value="Uracil-DNA glycosylase"/>
    <property type="match status" value="1"/>
</dbReference>
<dbReference type="Gene3D" id="3.40.470.10">
    <property type="entry name" value="Uracil-DNA glycosylase-like domain"/>
    <property type="match status" value="1"/>
</dbReference>
<dbReference type="HAMAP" id="MF_00148">
    <property type="entry name" value="UDG"/>
    <property type="match status" value="1"/>
</dbReference>
<dbReference type="InterPro" id="IPR002043">
    <property type="entry name" value="UDG_fam1"/>
</dbReference>
<dbReference type="InterPro" id="IPR018085">
    <property type="entry name" value="Ura-DNA_Glyclase_AS"/>
</dbReference>
<dbReference type="InterPro" id="IPR005122">
    <property type="entry name" value="Uracil-DNA_glycosylase-like"/>
</dbReference>
<dbReference type="InterPro" id="IPR036895">
    <property type="entry name" value="Uracil-DNA_glycosylase-like_sf"/>
</dbReference>
<dbReference type="NCBIfam" id="NF003588">
    <property type="entry name" value="PRK05254.1-1"/>
    <property type="match status" value="1"/>
</dbReference>
<dbReference type="NCBIfam" id="NF003589">
    <property type="entry name" value="PRK05254.1-2"/>
    <property type="match status" value="1"/>
</dbReference>
<dbReference type="NCBIfam" id="NF003591">
    <property type="entry name" value="PRK05254.1-4"/>
    <property type="match status" value="1"/>
</dbReference>
<dbReference type="NCBIfam" id="NF003592">
    <property type="entry name" value="PRK05254.1-5"/>
    <property type="match status" value="1"/>
</dbReference>
<dbReference type="NCBIfam" id="TIGR00628">
    <property type="entry name" value="ung"/>
    <property type="match status" value="1"/>
</dbReference>
<dbReference type="PANTHER" id="PTHR11264">
    <property type="entry name" value="URACIL-DNA GLYCOSYLASE"/>
    <property type="match status" value="1"/>
</dbReference>
<dbReference type="PANTHER" id="PTHR11264:SF0">
    <property type="entry name" value="URACIL-DNA GLYCOSYLASE"/>
    <property type="match status" value="1"/>
</dbReference>
<dbReference type="Pfam" id="PF03167">
    <property type="entry name" value="UDG"/>
    <property type="match status" value="1"/>
</dbReference>
<dbReference type="SMART" id="SM00986">
    <property type="entry name" value="UDG"/>
    <property type="match status" value="1"/>
</dbReference>
<dbReference type="SMART" id="SM00987">
    <property type="entry name" value="UreE_C"/>
    <property type="match status" value="1"/>
</dbReference>
<dbReference type="SUPFAM" id="SSF52141">
    <property type="entry name" value="Uracil-DNA glycosylase-like"/>
    <property type="match status" value="1"/>
</dbReference>
<dbReference type="PROSITE" id="PS00130">
    <property type="entry name" value="U_DNA_GLYCOSYLASE"/>
    <property type="match status" value="1"/>
</dbReference>
<organism>
    <name type="scientific">Listeria monocytogenes serovar 1/2a (strain ATCC BAA-679 / EGD-e)</name>
    <dbReference type="NCBI Taxonomy" id="169963"/>
    <lineage>
        <taxon>Bacteria</taxon>
        <taxon>Bacillati</taxon>
        <taxon>Bacillota</taxon>
        <taxon>Bacilli</taxon>
        <taxon>Bacillales</taxon>
        <taxon>Listeriaceae</taxon>
        <taxon>Listeria</taxon>
    </lineage>
</organism>
<comment type="function">
    <text evidence="1">Excises uracil residues from the DNA which can arise as a result of misincorporation of dUMP residues by DNA polymerase or due to deamination of cytosine.</text>
</comment>
<comment type="catalytic activity">
    <reaction evidence="1">
        <text>Hydrolyzes single-stranded DNA or mismatched double-stranded DNA and polynucleotides, releasing free uracil.</text>
        <dbReference type="EC" id="3.2.2.27"/>
    </reaction>
</comment>
<comment type="subcellular location">
    <subcellularLocation>
        <location evidence="1">Cytoplasm</location>
    </subcellularLocation>
</comment>
<comment type="similarity">
    <text evidence="1">Belongs to the uracil-DNA glycosylase (UDG) superfamily. UNG family.</text>
</comment>
<reference key="1">
    <citation type="journal article" date="2001" name="Science">
        <title>Comparative genomics of Listeria species.</title>
        <authorList>
            <person name="Glaser P."/>
            <person name="Frangeul L."/>
            <person name="Buchrieser C."/>
            <person name="Rusniok C."/>
            <person name="Amend A."/>
            <person name="Baquero F."/>
            <person name="Berche P."/>
            <person name="Bloecker H."/>
            <person name="Brandt P."/>
            <person name="Chakraborty T."/>
            <person name="Charbit A."/>
            <person name="Chetouani F."/>
            <person name="Couve E."/>
            <person name="de Daruvar A."/>
            <person name="Dehoux P."/>
            <person name="Domann E."/>
            <person name="Dominguez-Bernal G."/>
            <person name="Duchaud E."/>
            <person name="Durant L."/>
            <person name="Dussurget O."/>
            <person name="Entian K.-D."/>
            <person name="Fsihi H."/>
            <person name="Garcia-del Portillo F."/>
            <person name="Garrido P."/>
            <person name="Gautier L."/>
            <person name="Goebel W."/>
            <person name="Gomez-Lopez N."/>
            <person name="Hain T."/>
            <person name="Hauf J."/>
            <person name="Jackson D."/>
            <person name="Jones L.-M."/>
            <person name="Kaerst U."/>
            <person name="Kreft J."/>
            <person name="Kuhn M."/>
            <person name="Kunst F."/>
            <person name="Kurapkat G."/>
            <person name="Madueno E."/>
            <person name="Maitournam A."/>
            <person name="Mata Vicente J."/>
            <person name="Ng E."/>
            <person name="Nedjari H."/>
            <person name="Nordsiek G."/>
            <person name="Novella S."/>
            <person name="de Pablos B."/>
            <person name="Perez-Diaz J.-C."/>
            <person name="Purcell R."/>
            <person name="Remmel B."/>
            <person name="Rose M."/>
            <person name="Schlueter T."/>
            <person name="Simoes N."/>
            <person name="Tierrez A."/>
            <person name="Vazquez-Boland J.-A."/>
            <person name="Voss H."/>
            <person name="Wehland J."/>
            <person name="Cossart P."/>
        </authorList>
    </citation>
    <scope>NUCLEOTIDE SEQUENCE [LARGE SCALE GENOMIC DNA]</scope>
    <source>
        <strain>ATCC BAA-679 / EGD-e</strain>
    </source>
</reference>
<evidence type="ECO:0000255" key="1">
    <source>
        <dbReference type="HAMAP-Rule" id="MF_00148"/>
    </source>
</evidence>
<proteinExistence type="inferred from homology"/>
<name>UNG2_LISMO</name>